<reference key="1">
    <citation type="journal article" date="1997" name="Nature">
        <title>The nucleotide sequence of Saccharomyces cerevisiae chromosome IX.</title>
        <authorList>
            <person name="Churcher C.M."/>
            <person name="Bowman S."/>
            <person name="Badcock K."/>
            <person name="Bankier A.T."/>
            <person name="Brown D."/>
            <person name="Chillingworth T."/>
            <person name="Connor R."/>
            <person name="Devlin K."/>
            <person name="Gentles S."/>
            <person name="Hamlin N."/>
            <person name="Harris D.E."/>
            <person name="Horsnell T."/>
            <person name="Hunt S."/>
            <person name="Jagels K."/>
            <person name="Jones M."/>
            <person name="Lye G."/>
            <person name="Moule S."/>
            <person name="Odell C."/>
            <person name="Pearson D."/>
            <person name="Rajandream M.A."/>
            <person name="Rice P."/>
            <person name="Rowley N."/>
            <person name="Skelton J."/>
            <person name="Smith V."/>
            <person name="Walsh S.V."/>
            <person name="Whitehead S."/>
            <person name="Barrell B.G."/>
        </authorList>
    </citation>
    <scope>NUCLEOTIDE SEQUENCE [LARGE SCALE GENOMIC DNA]</scope>
    <source>
        <strain>ATCC 204508 / S288c</strain>
    </source>
</reference>
<reference key="2">
    <citation type="journal article" date="2014" name="G3 (Bethesda)">
        <title>The reference genome sequence of Saccharomyces cerevisiae: Then and now.</title>
        <authorList>
            <person name="Engel S.R."/>
            <person name="Dietrich F.S."/>
            <person name="Fisk D.G."/>
            <person name="Binkley G."/>
            <person name="Balakrishnan R."/>
            <person name="Costanzo M.C."/>
            <person name="Dwight S.S."/>
            <person name="Hitz B.C."/>
            <person name="Karra K."/>
            <person name="Nash R.S."/>
            <person name="Weng S."/>
            <person name="Wong E.D."/>
            <person name="Lloyd P."/>
            <person name="Skrzypek M.S."/>
            <person name="Miyasato S.R."/>
            <person name="Simison M."/>
            <person name="Cherry J.M."/>
        </authorList>
    </citation>
    <scope>GENOME REANNOTATION</scope>
    <source>
        <strain>ATCC 204508 / S288c</strain>
    </source>
</reference>
<reference key="3">
    <citation type="journal article" date="2002" name="Nat. Biotechnol.">
        <title>An integrated approach for finding overlooked genes in yeast.</title>
        <authorList>
            <person name="Kumar A."/>
            <person name="Harrison P.M."/>
            <person name="Cheung K.-H."/>
            <person name="Lan N."/>
            <person name="Echols N."/>
            <person name="Bertone P."/>
            <person name="Miller P."/>
            <person name="Gerstein M.B."/>
            <person name="Snyder M."/>
        </authorList>
    </citation>
    <scope>NUCLEOTIDE SEQUENCE [GENOMIC DNA]</scope>
</reference>
<comment type="miscellaneous">
    <text evidence="1">Completely overlaps RPB3.</text>
</comment>
<comment type="caution">
    <text evidence="2">Product of a dubious gene prediction unlikely to encode a functional protein. Because of that it is not part of the S.cerevisiae S288c complete/reference proteome set.</text>
</comment>
<name>YI21A_YEAST</name>
<protein>
    <recommendedName>
        <fullName>Putative uncharacterized protein YIL021C-A</fullName>
    </recommendedName>
</protein>
<proteinExistence type="uncertain"/>
<evidence type="ECO:0000305" key="1"/>
<evidence type="ECO:0000305" key="2">
    <source>
    </source>
</evidence>
<accession>Q8TGN4</accession>
<dbReference type="EMBL" id="Z46881">
    <property type="status" value="NOT_ANNOTATED_CDS"/>
    <property type="molecule type" value="Genomic_DNA"/>
</dbReference>
<dbReference type="EMBL" id="AF479956">
    <property type="protein sequence ID" value="AAL79269.1"/>
    <property type="molecule type" value="Genomic_DNA"/>
</dbReference>
<dbReference type="PaxDb" id="4932-YIL021C-A"/>
<dbReference type="EnsemblFungi" id="YIL021C-A_mRNA">
    <property type="protein sequence ID" value="YIL021C-A"/>
    <property type="gene ID" value="YIL021C-A"/>
</dbReference>
<dbReference type="AGR" id="SGD:S000028656"/>
<dbReference type="SGD" id="S000028656">
    <property type="gene designation" value="YIL021C-A"/>
</dbReference>
<dbReference type="HOGENOM" id="CLU_2456501_0_0_1"/>
<organism>
    <name type="scientific">Saccharomyces cerevisiae (strain ATCC 204508 / S288c)</name>
    <name type="common">Baker's yeast</name>
    <dbReference type="NCBI Taxonomy" id="559292"/>
    <lineage>
        <taxon>Eukaryota</taxon>
        <taxon>Fungi</taxon>
        <taxon>Dikarya</taxon>
        <taxon>Ascomycota</taxon>
        <taxon>Saccharomycotina</taxon>
        <taxon>Saccharomycetes</taxon>
        <taxon>Saccharomycetales</taxon>
        <taxon>Saccharomycetaceae</taxon>
        <taxon>Saccharomyces</taxon>
    </lineage>
</organism>
<feature type="chain" id="PRO_0000299758" description="Putative uncharacterized protein YIL021C-A">
    <location>
        <begin position="1"/>
        <end position="89"/>
    </location>
</feature>
<sequence length="89" mass="10501">MFELIPRIILELYGCCWTPLGVLFGYTLFRNACQFQFLTFSQFTNKNTVTFFILYNRMPNITAHEIRHNYQVLAVDVCSTFAFAERLQC</sequence>
<gene>
    <name type="ordered locus">YIL021C-A</name>
</gene>